<dbReference type="EMBL" id="CP000480">
    <property type="protein sequence ID" value="ABK71362.1"/>
    <property type="molecule type" value="Genomic_DNA"/>
</dbReference>
<dbReference type="EMBL" id="CP001663">
    <property type="protein sequence ID" value="AFP36545.1"/>
    <property type="molecule type" value="Genomic_DNA"/>
</dbReference>
<dbReference type="RefSeq" id="YP_884480.1">
    <property type="nucleotide sequence ID" value="NC_008596.1"/>
</dbReference>
<dbReference type="SMR" id="A0QNJ2"/>
<dbReference type="STRING" id="246196.MSMEG_0062"/>
<dbReference type="PaxDb" id="246196-MSMEI_0063"/>
<dbReference type="KEGG" id="msb:LJ00_00310"/>
<dbReference type="KEGG" id="msg:MSMEI_0063"/>
<dbReference type="KEGG" id="msm:MSMEG_0062"/>
<dbReference type="PATRIC" id="fig|246196.19.peg.60"/>
<dbReference type="eggNOG" id="COG1674">
    <property type="taxonomic scope" value="Bacteria"/>
</dbReference>
<dbReference type="OrthoDB" id="9807790at2"/>
<dbReference type="Proteomes" id="UP000000757">
    <property type="component" value="Chromosome"/>
</dbReference>
<dbReference type="Proteomes" id="UP000006158">
    <property type="component" value="Chromosome"/>
</dbReference>
<dbReference type="GO" id="GO:0005737">
    <property type="term" value="C:cytoplasm"/>
    <property type="evidence" value="ECO:0007669"/>
    <property type="project" value="UniProtKB-SubCell"/>
</dbReference>
<dbReference type="GO" id="GO:0005524">
    <property type="term" value="F:ATP binding"/>
    <property type="evidence" value="ECO:0007669"/>
    <property type="project" value="UniProtKB-KW"/>
</dbReference>
<dbReference type="GO" id="GO:0016887">
    <property type="term" value="F:ATP hydrolysis activity"/>
    <property type="evidence" value="ECO:0007669"/>
    <property type="project" value="InterPro"/>
</dbReference>
<dbReference type="GO" id="GO:0003677">
    <property type="term" value="F:DNA binding"/>
    <property type="evidence" value="ECO:0007669"/>
    <property type="project" value="InterPro"/>
</dbReference>
<dbReference type="Gene3D" id="3.40.50.300">
    <property type="entry name" value="P-loop containing nucleotide triphosphate hydrolases"/>
    <property type="match status" value="2"/>
</dbReference>
<dbReference type="InterPro" id="IPR003593">
    <property type="entry name" value="AAA+_ATPase"/>
</dbReference>
<dbReference type="InterPro" id="IPR023837">
    <property type="entry name" value="EccCb-like_Actinobacteria"/>
</dbReference>
<dbReference type="InterPro" id="IPR050206">
    <property type="entry name" value="FtsK/SpoIIIE/SftA"/>
</dbReference>
<dbReference type="InterPro" id="IPR002543">
    <property type="entry name" value="FtsK_dom"/>
</dbReference>
<dbReference type="InterPro" id="IPR027417">
    <property type="entry name" value="P-loop_NTPase"/>
</dbReference>
<dbReference type="NCBIfam" id="TIGR03925">
    <property type="entry name" value="T7SS_EccC_b"/>
    <property type="match status" value="1"/>
</dbReference>
<dbReference type="PANTHER" id="PTHR22683">
    <property type="entry name" value="SPORULATION PROTEIN RELATED"/>
    <property type="match status" value="1"/>
</dbReference>
<dbReference type="PANTHER" id="PTHR22683:SF1">
    <property type="entry name" value="TYPE VII SECRETION SYSTEM PROTEIN ESSC"/>
    <property type="match status" value="1"/>
</dbReference>
<dbReference type="Pfam" id="PF01580">
    <property type="entry name" value="FtsK_SpoIIIE"/>
    <property type="match status" value="2"/>
</dbReference>
<dbReference type="SMART" id="SM00382">
    <property type="entry name" value="AAA"/>
    <property type="match status" value="2"/>
</dbReference>
<dbReference type="SUPFAM" id="SSF52540">
    <property type="entry name" value="P-loop containing nucleoside triphosphate hydrolases"/>
    <property type="match status" value="2"/>
</dbReference>
<dbReference type="PROSITE" id="PS50901">
    <property type="entry name" value="FTSK"/>
    <property type="match status" value="2"/>
</dbReference>
<protein>
    <recommendedName>
        <fullName evidence="8">ESX-1 secretion system protein EccCb1</fullName>
    </recommendedName>
</protein>
<organism>
    <name type="scientific">Mycolicibacterium smegmatis (strain ATCC 700084 / mc(2)155)</name>
    <name type="common">Mycobacterium smegmatis</name>
    <dbReference type="NCBI Taxonomy" id="246196"/>
    <lineage>
        <taxon>Bacteria</taxon>
        <taxon>Bacillati</taxon>
        <taxon>Actinomycetota</taxon>
        <taxon>Actinomycetes</taxon>
        <taxon>Mycobacteriales</taxon>
        <taxon>Mycobacteriaceae</taxon>
        <taxon>Mycolicibacterium</taxon>
    </lineage>
</organism>
<gene>
    <name evidence="8" type="primary">eccCb1</name>
    <name evidence="6" type="synonym">Ms3871</name>
    <name evidence="7" type="synonym">Sm3871</name>
    <name evidence="7" type="synonym">snm2</name>
    <name type="ordered locus">MSMEG_0062</name>
    <name type="ordered locus">MSMEI_0063</name>
</gene>
<keyword id="KW-0067">ATP-binding</keyword>
<keyword id="KW-0963">Cytoplasm</keyword>
<keyword id="KW-0547">Nucleotide-binding</keyword>
<keyword id="KW-1185">Reference proteome</keyword>
<keyword id="KW-0677">Repeat</keyword>
<keyword id="KW-0813">Transport</keyword>
<name>ECC1B_MYCS2</name>
<comment type="function">
    <text evidence="3 4">Part of the ESX-1 / type VII specialized secretion system (T7SS), which exports several proteins including EsxA and EsxB (PubMed:15687187). Plays a role in DNA conjugation, in both donor and recipient strains (PubMed:15314236).</text>
</comment>
<comment type="subunit">
    <text evidence="1">Part of the ESX-1 / type VII secretion system (T7SS), which is composed of cytosolic and membrane components. The ESX-1 membrane complex is composed of EccB1, EccCa1, EccCb1, EccD1 and EccE1 (By similarity).</text>
</comment>
<comment type="subcellular location">
    <subcellularLocation>
        <location evidence="8">Cytoplasm</location>
    </subcellularLocation>
    <text evidence="5">Localizes at or near the cell pole in (on average) 1 discrete spot that also colocalizes with SaeC. Localization requires SaeC and other ESX-1 proteins and can be conferred by the ESX-1 locus of M.tuberculosis (PubMed:22233444).</text>
</comment>
<comment type="disruption phenotype">
    <text evidence="3 4">Increases efficiency of DNA conjugation when disrupted in donor strain (PubMed:15314236). Loss of secretion of EsxA and EsxB, but not their expression (PubMed:15687187).</text>
</comment>
<comment type="miscellaneous">
    <text evidence="9">DNA conjugation in M.smegmatis is unidirectional with distinct donor and recipient strains; mc(2)155 is a donor strain while MKD8 is a recipient strain. Mutations in a donor strain that alter DNA transfer do not always alter DNA transfer in a recipient strain.</text>
</comment>
<accession>A0QNJ2</accession>
<sequence length="593" mass="65057">MSTEAEPRVLREVVLSQLATGESRAYKMWLPPLTDPTPVNELVERDYQRRPLRFGLGIMDEPRRHRQEVWGVDVSAAGGNIAVGGAPQTGKSTFLQTLVVSAAATHTPRQVQFYCVDLGGGGLMYLEDLPHVGGVATRAEPDRVNRVVAEVKAVLRAREQVFKQYRVGSIASYREMRDDPNNPASQDPFGDVFLVIDGWPAFVAEFPDLEPAVQDIAGQGLAYGVHVIITTPRWTELKSRVRDYLGTKIEFRLGDVNETQIDRITREIPANRPGRAVSLEKHHLMMGVPRLDGVHSADNIVEAISSAVQQIADRHTDQAPQVRVLPERIYLHQLDPNPPGPDSDYRTRWQVPLGVRESDLTVAYNQMHLTPHLLIFGAPKSGKTRIAHAVAQAICKRNSPQQVRFMLADYRSGLLDAVPQSHLLDAGAINRNSATLEEAIKALAVNLKKRLPPPDLTTAQLRARSWWSGPDVVLLVDDWHMVTAAAGMVSPMAPLGPLLPAAADIGLHVIVTCQMSMAHRATMDKFVGAAYGAGSPTLFLSGEKNDFPSRDIIVKKRPPGQAFLVGPDGKEVIQAAYVDPPEEEVFSPPSEGS</sequence>
<feature type="chain" id="PRO_0000438314" description="ESX-1 secretion system protein EccCb1">
    <location>
        <begin position="1"/>
        <end position="593"/>
    </location>
</feature>
<feature type="domain" description="FtsK 1" evidence="2">
    <location>
        <begin position="66"/>
        <end position="260"/>
    </location>
</feature>
<feature type="domain" description="FtsK 2" evidence="2">
    <location>
        <begin position="350"/>
        <end position="546"/>
    </location>
</feature>
<feature type="binding site" evidence="2">
    <location>
        <begin position="85"/>
        <end position="92"/>
    </location>
    <ligand>
        <name>ATP</name>
        <dbReference type="ChEBI" id="CHEBI:30616"/>
    </ligand>
</feature>
<feature type="binding site" evidence="2">
    <location>
        <begin position="377"/>
        <end position="384"/>
    </location>
    <ligand>
        <name>ATP</name>
        <dbReference type="ChEBI" id="CHEBI:30616"/>
    </ligand>
</feature>
<reference key="1">
    <citation type="submission" date="2006-10" db="EMBL/GenBank/DDBJ databases">
        <authorList>
            <person name="Fleischmann R.D."/>
            <person name="Dodson R.J."/>
            <person name="Haft D.H."/>
            <person name="Merkel J.S."/>
            <person name="Nelson W.C."/>
            <person name="Fraser C.M."/>
        </authorList>
    </citation>
    <scope>NUCLEOTIDE SEQUENCE [LARGE SCALE GENOMIC DNA]</scope>
    <source>
        <strain>ATCC 700084 / mc(2)155</strain>
    </source>
</reference>
<reference key="2">
    <citation type="journal article" date="2007" name="Genome Biol.">
        <title>Interrupted coding sequences in Mycobacterium smegmatis: authentic mutations or sequencing errors?</title>
        <authorList>
            <person name="Deshayes C."/>
            <person name="Perrodou E."/>
            <person name="Gallien S."/>
            <person name="Euphrasie D."/>
            <person name="Schaeffer C."/>
            <person name="Van-Dorsselaer A."/>
            <person name="Poch O."/>
            <person name="Lecompte O."/>
            <person name="Reyrat J.-M."/>
        </authorList>
    </citation>
    <scope>NUCLEOTIDE SEQUENCE [LARGE SCALE GENOMIC DNA]</scope>
    <source>
        <strain>ATCC 700084 / mc(2)155</strain>
    </source>
</reference>
<reference key="3">
    <citation type="journal article" date="2009" name="Genome Res.">
        <title>Ortho-proteogenomics: multiple proteomes investigation through orthology and a new MS-based protocol.</title>
        <authorList>
            <person name="Gallien S."/>
            <person name="Perrodou E."/>
            <person name="Carapito C."/>
            <person name="Deshayes C."/>
            <person name="Reyrat J.-M."/>
            <person name="Van Dorsselaer A."/>
            <person name="Poch O."/>
            <person name="Schaeffer C."/>
            <person name="Lecompte O."/>
        </authorList>
    </citation>
    <scope>NUCLEOTIDE SEQUENCE [LARGE SCALE GENOMIC DNA]</scope>
    <source>
        <strain>ATCC 700084 / mc(2)155</strain>
    </source>
</reference>
<reference key="4">
    <citation type="journal article" date="2004" name="Proc. Natl. Acad. Sci. U.S.A.">
        <title>The RD1 virulence locus of Mycobacterium tuberculosis regulates DNA transfer in Mycobacterium smegmatis.</title>
        <authorList>
            <person name="Flint J.L."/>
            <person name="Kowalski J.C."/>
            <person name="Karnati P.K."/>
            <person name="Derbyshire K.M."/>
        </authorList>
    </citation>
    <scope>FUNCTION</scope>
    <scope>DISRUPTION PHENOTYPE</scope>
    <source>
        <strain>ATCC 700084 / mc(2)155</strain>
    </source>
</reference>
<reference key="5">
    <citation type="journal article" date="2005" name="J. Bacteriol.">
        <title>A protein secretion pathway critical for Mycobacterium tuberculosis virulence is conserved and functional in Mycobacterium smegmatis.</title>
        <authorList>
            <person name="Converse S.E."/>
            <person name="Cox J.S."/>
        </authorList>
    </citation>
    <scope>FUNCTION</scope>
    <scope>DISRUPTION PHENOTYPE</scope>
    <source>
        <strain>ATCC 700084 / mc(2)155</strain>
    </source>
</reference>
<reference key="6">
    <citation type="journal article" date="2012" name="Mol. Microbiol.">
        <title>Polar assembly and scaffolding proteins of the virulence-associated ESX-1 secretory apparatus in mycobacteria.</title>
        <authorList>
            <person name="Wirth S.E."/>
            <person name="Krywy J.A."/>
            <person name="Aldridge B.B."/>
            <person name="Fortune S.M."/>
            <person name="Fernandez-Suarez M."/>
            <person name="Gray T.A."/>
            <person name="Derbyshire K.M."/>
        </authorList>
    </citation>
    <scope>SUBCELLULAR LOCATION</scope>
    <source>
        <strain>ATCC 700084 / mc(2)155</strain>
    </source>
</reference>
<evidence type="ECO:0000250" key="1">
    <source>
        <dbReference type="UniProtKB" id="P9WNB1"/>
    </source>
</evidence>
<evidence type="ECO:0000255" key="2">
    <source>
        <dbReference type="PROSITE-ProRule" id="PRU00289"/>
    </source>
</evidence>
<evidence type="ECO:0000269" key="3">
    <source>
    </source>
</evidence>
<evidence type="ECO:0000269" key="4">
    <source>
    </source>
</evidence>
<evidence type="ECO:0000269" key="5">
    <source>
    </source>
</evidence>
<evidence type="ECO:0000303" key="6">
    <source>
    </source>
</evidence>
<evidence type="ECO:0000303" key="7">
    <source>
    </source>
</evidence>
<evidence type="ECO:0000305" key="8"/>
<evidence type="ECO:0000305" key="9">
    <source>
    </source>
</evidence>
<proteinExistence type="inferred from homology"/>